<reference key="1">
    <citation type="submission" date="2008-06" db="EMBL/GenBank/DDBJ databases">
        <title>Complete sequence of Stenotrophomonas maltophilia R551-3.</title>
        <authorList>
            <consortium name="US DOE Joint Genome Institute"/>
            <person name="Lucas S."/>
            <person name="Copeland A."/>
            <person name="Lapidus A."/>
            <person name="Glavina del Rio T."/>
            <person name="Dalin E."/>
            <person name="Tice H."/>
            <person name="Pitluck S."/>
            <person name="Chain P."/>
            <person name="Malfatti S."/>
            <person name="Shin M."/>
            <person name="Vergez L."/>
            <person name="Lang D."/>
            <person name="Schmutz J."/>
            <person name="Larimer F."/>
            <person name="Land M."/>
            <person name="Hauser L."/>
            <person name="Kyrpides N."/>
            <person name="Mikhailova N."/>
            <person name="Taghavi S."/>
            <person name="Monchy S."/>
            <person name="Newman L."/>
            <person name="Vangronsveld J."/>
            <person name="van der Lelie D."/>
            <person name="Richardson P."/>
        </authorList>
    </citation>
    <scope>NUCLEOTIDE SEQUENCE [LARGE SCALE GENOMIC DNA]</scope>
    <source>
        <strain>R551-3</strain>
    </source>
</reference>
<evidence type="ECO:0000255" key="1">
    <source>
        <dbReference type="HAMAP-Rule" id="MF_01318"/>
    </source>
</evidence>
<evidence type="ECO:0000305" key="2"/>
<proteinExistence type="inferred from homology"/>
<keyword id="KW-0678">Repressor</keyword>
<keyword id="KW-0687">Ribonucleoprotein</keyword>
<keyword id="KW-0689">Ribosomal protein</keyword>
<keyword id="KW-0694">RNA-binding</keyword>
<keyword id="KW-0699">rRNA-binding</keyword>
<keyword id="KW-0810">Translation regulation</keyword>
<keyword id="KW-0820">tRNA-binding</keyword>
<comment type="function">
    <text evidence="1">Binds directly to 23S rRNA. The L1 stalk is quite mobile in the ribosome, and is involved in E site tRNA release.</text>
</comment>
<comment type="function">
    <text evidence="1">Protein L1 is also a translational repressor protein, it controls the translation of the L11 operon by binding to its mRNA.</text>
</comment>
<comment type="subunit">
    <text evidence="1">Part of the 50S ribosomal subunit.</text>
</comment>
<comment type="similarity">
    <text evidence="1">Belongs to the universal ribosomal protein uL1 family.</text>
</comment>
<gene>
    <name evidence="1" type="primary">rplA</name>
    <name type="ordered locus">Smal_0746</name>
</gene>
<sequence>MAQTKREKAIKAAVVPGKAYAFEDAINILKTATKAKFVESIDVSVRLGVDAKKSDQQVRGSTVLPAGTGKSVRVAVFAPAGAKADEALAAGAEAVGMDDLAEKMQAGDLNYDVVIATPDAMRVVGKLGTVLGPRGLMPNPKVGTVSPNPGEAVKNAKSGQVRYRTDKAGIIHCTIGKADFAEDALKSNLTALLLDLIKAKPATSKGTYLQKVSVSSTMGPGVTVDQSSLTLK</sequence>
<organism>
    <name type="scientific">Stenotrophomonas maltophilia (strain R551-3)</name>
    <dbReference type="NCBI Taxonomy" id="391008"/>
    <lineage>
        <taxon>Bacteria</taxon>
        <taxon>Pseudomonadati</taxon>
        <taxon>Pseudomonadota</taxon>
        <taxon>Gammaproteobacteria</taxon>
        <taxon>Lysobacterales</taxon>
        <taxon>Lysobacteraceae</taxon>
        <taxon>Stenotrophomonas</taxon>
        <taxon>Stenotrophomonas maltophilia group</taxon>
    </lineage>
</organism>
<name>RL1_STRM5</name>
<protein>
    <recommendedName>
        <fullName evidence="1">Large ribosomal subunit protein uL1</fullName>
    </recommendedName>
    <alternativeName>
        <fullName evidence="2">50S ribosomal protein L1</fullName>
    </alternativeName>
</protein>
<accession>B4SKV3</accession>
<feature type="chain" id="PRO_1000141465" description="Large ribosomal subunit protein uL1">
    <location>
        <begin position="1"/>
        <end position="232"/>
    </location>
</feature>
<dbReference type="EMBL" id="CP001111">
    <property type="protein sequence ID" value="ACF50451.1"/>
    <property type="molecule type" value="Genomic_DNA"/>
</dbReference>
<dbReference type="RefSeq" id="WP_004145250.1">
    <property type="nucleotide sequence ID" value="NC_011071.1"/>
</dbReference>
<dbReference type="SMR" id="B4SKV3"/>
<dbReference type="STRING" id="391008.Smal_0746"/>
<dbReference type="KEGG" id="smt:Smal_0746"/>
<dbReference type="eggNOG" id="COG0081">
    <property type="taxonomic scope" value="Bacteria"/>
</dbReference>
<dbReference type="HOGENOM" id="CLU_062853_0_0_6"/>
<dbReference type="OrthoDB" id="9803740at2"/>
<dbReference type="Proteomes" id="UP000001867">
    <property type="component" value="Chromosome"/>
</dbReference>
<dbReference type="GO" id="GO:0022625">
    <property type="term" value="C:cytosolic large ribosomal subunit"/>
    <property type="evidence" value="ECO:0007669"/>
    <property type="project" value="TreeGrafter"/>
</dbReference>
<dbReference type="GO" id="GO:0019843">
    <property type="term" value="F:rRNA binding"/>
    <property type="evidence" value="ECO:0007669"/>
    <property type="project" value="UniProtKB-UniRule"/>
</dbReference>
<dbReference type="GO" id="GO:0003735">
    <property type="term" value="F:structural constituent of ribosome"/>
    <property type="evidence" value="ECO:0007669"/>
    <property type="project" value="InterPro"/>
</dbReference>
<dbReference type="GO" id="GO:0000049">
    <property type="term" value="F:tRNA binding"/>
    <property type="evidence" value="ECO:0007669"/>
    <property type="project" value="UniProtKB-KW"/>
</dbReference>
<dbReference type="GO" id="GO:0006417">
    <property type="term" value="P:regulation of translation"/>
    <property type="evidence" value="ECO:0007669"/>
    <property type="project" value="UniProtKB-KW"/>
</dbReference>
<dbReference type="GO" id="GO:0006412">
    <property type="term" value="P:translation"/>
    <property type="evidence" value="ECO:0007669"/>
    <property type="project" value="UniProtKB-UniRule"/>
</dbReference>
<dbReference type="CDD" id="cd00403">
    <property type="entry name" value="Ribosomal_L1"/>
    <property type="match status" value="1"/>
</dbReference>
<dbReference type="FunFam" id="3.40.50.790:FF:000001">
    <property type="entry name" value="50S ribosomal protein L1"/>
    <property type="match status" value="1"/>
</dbReference>
<dbReference type="Gene3D" id="3.30.190.20">
    <property type="match status" value="1"/>
</dbReference>
<dbReference type="Gene3D" id="3.40.50.790">
    <property type="match status" value="1"/>
</dbReference>
<dbReference type="HAMAP" id="MF_01318_B">
    <property type="entry name" value="Ribosomal_uL1_B"/>
    <property type="match status" value="1"/>
</dbReference>
<dbReference type="InterPro" id="IPR005878">
    <property type="entry name" value="Ribosom_uL1_bac-type"/>
</dbReference>
<dbReference type="InterPro" id="IPR002143">
    <property type="entry name" value="Ribosomal_uL1"/>
</dbReference>
<dbReference type="InterPro" id="IPR023674">
    <property type="entry name" value="Ribosomal_uL1-like"/>
</dbReference>
<dbReference type="InterPro" id="IPR028364">
    <property type="entry name" value="Ribosomal_uL1/biogenesis"/>
</dbReference>
<dbReference type="InterPro" id="IPR016095">
    <property type="entry name" value="Ribosomal_uL1_3-a/b-sand"/>
</dbReference>
<dbReference type="InterPro" id="IPR023673">
    <property type="entry name" value="Ribosomal_uL1_CS"/>
</dbReference>
<dbReference type="NCBIfam" id="TIGR01169">
    <property type="entry name" value="rplA_bact"/>
    <property type="match status" value="1"/>
</dbReference>
<dbReference type="PANTHER" id="PTHR36427">
    <property type="entry name" value="54S RIBOSOMAL PROTEIN L1, MITOCHONDRIAL"/>
    <property type="match status" value="1"/>
</dbReference>
<dbReference type="PANTHER" id="PTHR36427:SF3">
    <property type="entry name" value="LARGE RIBOSOMAL SUBUNIT PROTEIN UL1M"/>
    <property type="match status" value="1"/>
</dbReference>
<dbReference type="Pfam" id="PF00687">
    <property type="entry name" value="Ribosomal_L1"/>
    <property type="match status" value="1"/>
</dbReference>
<dbReference type="PIRSF" id="PIRSF002155">
    <property type="entry name" value="Ribosomal_L1"/>
    <property type="match status" value="1"/>
</dbReference>
<dbReference type="SUPFAM" id="SSF56808">
    <property type="entry name" value="Ribosomal protein L1"/>
    <property type="match status" value="1"/>
</dbReference>
<dbReference type="PROSITE" id="PS01199">
    <property type="entry name" value="RIBOSOMAL_L1"/>
    <property type="match status" value="1"/>
</dbReference>